<accession>Q6NDR9</accession>
<protein>
    <recommendedName>
        <fullName evidence="1">Phenylalanine--tRNA ligase beta subunit</fullName>
        <ecNumber evidence="1">6.1.1.20</ecNumber>
    </recommendedName>
    <alternativeName>
        <fullName evidence="1">Phenylalanyl-tRNA synthetase beta subunit</fullName>
        <shortName evidence="1">PheRS</shortName>
    </alternativeName>
</protein>
<keyword id="KW-0030">Aminoacyl-tRNA synthetase</keyword>
<keyword id="KW-0067">ATP-binding</keyword>
<keyword id="KW-0963">Cytoplasm</keyword>
<keyword id="KW-0436">Ligase</keyword>
<keyword id="KW-0460">Magnesium</keyword>
<keyword id="KW-0479">Metal-binding</keyword>
<keyword id="KW-0547">Nucleotide-binding</keyword>
<keyword id="KW-0648">Protein biosynthesis</keyword>
<keyword id="KW-0694">RNA-binding</keyword>
<keyword id="KW-0820">tRNA-binding</keyword>
<proteinExistence type="inferred from homology"/>
<reference key="1">
    <citation type="journal article" date="2004" name="Nat. Biotechnol.">
        <title>Complete genome sequence of the metabolically versatile photosynthetic bacterium Rhodopseudomonas palustris.</title>
        <authorList>
            <person name="Larimer F.W."/>
            <person name="Chain P."/>
            <person name="Hauser L."/>
            <person name="Lamerdin J.E."/>
            <person name="Malfatti S."/>
            <person name="Do L."/>
            <person name="Land M.L."/>
            <person name="Pelletier D.A."/>
            <person name="Beatty J.T."/>
            <person name="Lang A.S."/>
            <person name="Tabita F.R."/>
            <person name="Gibson J.L."/>
            <person name="Hanson T.E."/>
            <person name="Bobst C."/>
            <person name="Torres y Torres J.L."/>
            <person name="Peres C."/>
            <person name="Harrison F.H."/>
            <person name="Gibson J."/>
            <person name="Harwood C.S."/>
        </authorList>
    </citation>
    <scope>NUCLEOTIDE SEQUENCE [LARGE SCALE GENOMIC DNA]</scope>
    <source>
        <strain>ATCC BAA-98 / CGA009</strain>
    </source>
</reference>
<comment type="catalytic activity">
    <reaction evidence="1">
        <text>tRNA(Phe) + L-phenylalanine + ATP = L-phenylalanyl-tRNA(Phe) + AMP + diphosphate + H(+)</text>
        <dbReference type="Rhea" id="RHEA:19413"/>
        <dbReference type="Rhea" id="RHEA-COMP:9668"/>
        <dbReference type="Rhea" id="RHEA-COMP:9699"/>
        <dbReference type="ChEBI" id="CHEBI:15378"/>
        <dbReference type="ChEBI" id="CHEBI:30616"/>
        <dbReference type="ChEBI" id="CHEBI:33019"/>
        <dbReference type="ChEBI" id="CHEBI:58095"/>
        <dbReference type="ChEBI" id="CHEBI:78442"/>
        <dbReference type="ChEBI" id="CHEBI:78531"/>
        <dbReference type="ChEBI" id="CHEBI:456215"/>
        <dbReference type="EC" id="6.1.1.20"/>
    </reaction>
</comment>
<comment type="cofactor">
    <cofactor evidence="1">
        <name>Mg(2+)</name>
        <dbReference type="ChEBI" id="CHEBI:18420"/>
    </cofactor>
    <text evidence="1">Binds 2 magnesium ions per tetramer.</text>
</comment>
<comment type="subunit">
    <text evidence="1">Tetramer of two alpha and two beta subunits.</text>
</comment>
<comment type="subcellular location">
    <subcellularLocation>
        <location evidence="1">Cytoplasm</location>
    </subcellularLocation>
</comment>
<comment type="similarity">
    <text evidence="1">Belongs to the phenylalanyl-tRNA synthetase beta subunit family. Type 1 subfamily.</text>
</comment>
<feature type="chain" id="PRO_0000126938" description="Phenylalanine--tRNA ligase beta subunit">
    <location>
        <begin position="1"/>
        <end position="803"/>
    </location>
</feature>
<feature type="domain" description="tRNA-binding" evidence="1">
    <location>
        <begin position="39"/>
        <end position="150"/>
    </location>
</feature>
<feature type="domain" description="B5" evidence="1">
    <location>
        <begin position="400"/>
        <end position="475"/>
    </location>
</feature>
<feature type="domain" description="FDX-ACB" evidence="1">
    <location>
        <begin position="709"/>
        <end position="802"/>
    </location>
</feature>
<feature type="binding site" evidence="1">
    <location>
        <position position="453"/>
    </location>
    <ligand>
        <name>Mg(2+)</name>
        <dbReference type="ChEBI" id="CHEBI:18420"/>
        <note>shared with alpha subunit</note>
    </ligand>
</feature>
<feature type="binding site" evidence="1">
    <location>
        <position position="459"/>
    </location>
    <ligand>
        <name>Mg(2+)</name>
        <dbReference type="ChEBI" id="CHEBI:18420"/>
        <note>shared with alpha subunit</note>
    </ligand>
</feature>
<feature type="binding site" evidence="1">
    <location>
        <position position="462"/>
    </location>
    <ligand>
        <name>Mg(2+)</name>
        <dbReference type="ChEBI" id="CHEBI:18420"/>
        <note>shared with alpha subunit</note>
    </ligand>
</feature>
<feature type="binding site" evidence="1">
    <location>
        <position position="463"/>
    </location>
    <ligand>
        <name>Mg(2+)</name>
        <dbReference type="ChEBI" id="CHEBI:18420"/>
        <note>shared with alpha subunit</note>
    </ligand>
</feature>
<name>SYFB_RHOPA</name>
<dbReference type="EC" id="6.1.1.20" evidence="1"/>
<dbReference type="EMBL" id="BX572593">
    <property type="protein sequence ID" value="CAE25479.1"/>
    <property type="molecule type" value="Genomic_DNA"/>
</dbReference>
<dbReference type="RefSeq" id="WP_011155606.1">
    <property type="nucleotide sequence ID" value="NZ_CP116810.1"/>
</dbReference>
<dbReference type="SMR" id="Q6NDR9"/>
<dbReference type="STRING" id="258594.RPA0035"/>
<dbReference type="DNASU" id="2692122"/>
<dbReference type="GeneID" id="66891034"/>
<dbReference type="eggNOG" id="COG0072">
    <property type="taxonomic scope" value="Bacteria"/>
</dbReference>
<dbReference type="eggNOG" id="COG0073">
    <property type="taxonomic scope" value="Bacteria"/>
</dbReference>
<dbReference type="HOGENOM" id="CLU_016891_0_0_5"/>
<dbReference type="PhylomeDB" id="Q6NDR9"/>
<dbReference type="GO" id="GO:0009328">
    <property type="term" value="C:phenylalanine-tRNA ligase complex"/>
    <property type="evidence" value="ECO:0007669"/>
    <property type="project" value="TreeGrafter"/>
</dbReference>
<dbReference type="GO" id="GO:0005524">
    <property type="term" value="F:ATP binding"/>
    <property type="evidence" value="ECO:0007669"/>
    <property type="project" value="UniProtKB-UniRule"/>
</dbReference>
<dbReference type="GO" id="GO:0000287">
    <property type="term" value="F:magnesium ion binding"/>
    <property type="evidence" value="ECO:0007669"/>
    <property type="project" value="UniProtKB-UniRule"/>
</dbReference>
<dbReference type="GO" id="GO:0004826">
    <property type="term" value="F:phenylalanine-tRNA ligase activity"/>
    <property type="evidence" value="ECO:0007669"/>
    <property type="project" value="UniProtKB-UniRule"/>
</dbReference>
<dbReference type="GO" id="GO:0000049">
    <property type="term" value="F:tRNA binding"/>
    <property type="evidence" value="ECO:0007669"/>
    <property type="project" value="UniProtKB-KW"/>
</dbReference>
<dbReference type="GO" id="GO:0006432">
    <property type="term" value="P:phenylalanyl-tRNA aminoacylation"/>
    <property type="evidence" value="ECO:0007669"/>
    <property type="project" value="UniProtKB-UniRule"/>
</dbReference>
<dbReference type="CDD" id="cd00769">
    <property type="entry name" value="PheRS_beta_core"/>
    <property type="match status" value="1"/>
</dbReference>
<dbReference type="CDD" id="cd02796">
    <property type="entry name" value="tRNA_bind_bactPheRS"/>
    <property type="match status" value="1"/>
</dbReference>
<dbReference type="FunFam" id="2.40.50.140:FF:000045">
    <property type="entry name" value="Phenylalanine--tRNA ligase beta subunit"/>
    <property type="match status" value="1"/>
</dbReference>
<dbReference type="FunFam" id="3.30.70.380:FF:000001">
    <property type="entry name" value="Phenylalanine--tRNA ligase beta subunit"/>
    <property type="match status" value="1"/>
</dbReference>
<dbReference type="Gene3D" id="3.30.56.10">
    <property type="match status" value="2"/>
</dbReference>
<dbReference type="Gene3D" id="3.30.930.10">
    <property type="entry name" value="Bira Bifunctional Protein, Domain 2"/>
    <property type="match status" value="1"/>
</dbReference>
<dbReference type="Gene3D" id="3.30.70.380">
    <property type="entry name" value="Ferrodoxin-fold anticodon-binding domain"/>
    <property type="match status" value="1"/>
</dbReference>
<dbReference type="Gene3D" id="2.40.50.140">
    <property type="entry name" value="Nucleic acid-binding proteins"/>
    <property type="match status" value="1"/>
</dbReference>
<dbReference type="Gene3D" id="3.50.40.10">
    <property type="entry name" value="Phenylalanyl-trna Synthetase, Chain B, domain 3"/>
    <property type="match status" value="1"/>
</dbReference>
<dbReference type="HAMAP" id="MF_00283">
    <property type="entry name" value="Phe_tRNA_synth_beta1"/>
    <property type="match status" value="1"/>
</dbReference>
<dbReference type="InterPro" id="IPR045864">
    <property type="entry name" value="aa-tRNA-synth_II/BPL/LPL"/>
</dbReference>
<dbReference type="InterPro" id="IPR005146">
    <property type="entry name" value="B3/B4_tRNA-bd"/>
</dbReference>
<dbReference type="InterPro" id="IPR009061">
    <property type="entry name" value="DNA-bd_dom_put_sf"/>
</dbReference>
<dbReference type="InterPro" id="IPR005121">
    <property type="entry name" value="Fdx_antiC-bd"/>
</dbReference>
<dbReference type="InterPro" id="IPR036690">
    <property type="entry name" value="Fdx_antiC-bd_sf"/>
</dbReference>
<dbReference type="InterPro" id="IPR012340">
    <property type="entry name" value="NA-bd_OB-fold"/>
</dbReference>
<dbReference type="InterPro" id="IPR045060">
    <property type="entry name" value="Phe-tRNA-ligase_IIc_bsu"/>
</dbReference>
<dbReference type="InterPro" id="IPR004532">
    <property type="entry name" value="Phe-tRNA-ligase_IIc_bsu_bact"/>
</dbReference>
<dbReference type="InterPro" id="IPR020825">
    <property type="entry name" value="Phe-tRNA_synthase-like_B3/B4"/>
</dbReference>
<dbReference type="InterPro" id="IPR041616">
    <property type="entry name" value="PheRS_beta_core"/>
</dbReference>
<dbReference type="InterPro" id="IPR002547">
    <property type="entry name" value="tRNA-bd_dom"/>
</dbReference>
<dbReference type="InterPro" id="IPR033714">
    <property type="entry name" value="tRNA_bind_bactPheRS"/>
</dbReference>
<dbReference type="InterPro" id="IPR005147">
    <property type="entry name" value="tRNA_synthase_B5-dom"/>
</dbReference>
<dbReference type="NCBIfam" id="TIGR00472">
    <property type="entry name" value="pheT_bact"/>
    <property type="match status" value="1"/>
</dbReference>
<dbReference type="NCBIfam" id="NF045760">
    <property type="entry name" value="YtpR"/>
    <property type="match status" value="1"/>
</dbReference>
<dbReference type="PANTHER" id="PTHR10947:SF0">
    <property type="entry name" value="PHENYLALANINE--TRNA LIGASE BETA SUBUNIT"/>
    <property type="match status" value="1"/>
</dbReference>
<dbReference type="PANTHER" id="PTHR10947">
    <property type="entry name" value="PHENYLALANYL-TRNA SYNTHETASE BETA CHAIN AND LEUCINE-RICH REPEAT-CONTAINING PROTEIN 47"/>
    <property type="match status" value="1"/>
</dbReference>
<dbReference type="Pfam" id="PF03483">
    <property type="entry name" value="B3_4"/>
    <property type="match status" value="1"/>
</dbReference>
<dbReference type="Pfam" id="PF03484">
    <property type="entry name" value="B5"/>
    <property type="match status" value="1"/>
</dbReference>
<dbReference type="Pfam" id="PF03147">
    <property type="entry name" value="FDX-ACB"/>
    <property type="match status" value="1"/>
</dbReference>
<dbReference type="Pfam" id="PF01588">
    <property type="entry name" value="tRNA_bind"/>
    <property type="match status" value="1"/>
</dbReference>
<dbReference type="Pfam" id="PF17759">
    <property type="entry name" value="tRNA_synthFbeta"/>
    <property type="match status" value="1"/>
</dbReference>
<dbReference type="SMART" id="SM00873">
    <property type="entry name" value="B3_4"/>
    <property type="match status" value="1"/>
</dbReference>
<dbReference type="SMART" id="SM00874">
    <property type="entry name" value="B5"/>
    <property type="match status" value="1"/>
</dbReference>
<dbReference type="SMART" id="SM00896">
    <property type="entry name" value="FDX-ACB"/>
    <property type="match status" value="1"/>
</dbReference>
<dbReference type="SUPFAM" id="SSF54991">
    <property type="entry name" value="Anticodon-binding domain of PheRS"/>
    <property type="match status" value="1"/>
</dbReference>
<dbReference type="SUPFAM" id="SSF55681">
    <property type="entry name" value="Class II aaRS and biotin synthetases"/>
    <property type="match status" value="1"/>
</dbReference>
<dbReference type="SUPFAM" id="SSF50249">
    <property type="entry name" value="Nucleic acid-binding proteins"/>
    <property type="match status" value="1"/>
</dbReference>
<dbReference type="SUPFAM" id="SSF56037">
    <property type="entry name" value="PheT/TilS domain"/>
    <property type="match status" value="1"/>
</dbReference>
<dbReference type="SUPFAM" id="SSF46955">
    <property type="entry name" value="Putative DNA-binding domain"/>
    <property type="match status" value="1"/>
</dbReference>
<dbReference type="PROSITE" id="PS51483">
    <property type="entry name" value="B5"/>
    <property type="match status" value="1"/>
</dbReference>
<dbReference type="PROSITE" id="PS51447">
    <property type="entry name" value="FDX_ACB"/>
    <property type="match status" value="1"/>
</dbReference>
<dbReference type="PROSITE" id="PS50886">
    <property type="entry name" value="TRBD"/>
    <property type="match status" value="1"/>
</dbReference>
<gene>
    <name evidence="1" type="primary">pheT</name>
    <name type="ordered locus">RPA0035</name>
</gene>
<sequence>MKLTLSWLKDHLDTDEPLEKLADKLTMIGLEVEGIEDKAKVLAPFTIAKVLTAAKHPNADKLQVCTVDVGDGAAPVQVVCGAPNARAGLVTVFAPPGTYIPAKDFTLGIGNIRGVESRGMLCSAAELQISEDHDGIIELPADAPVGAAYAAWAGLGDPVLDINLTPNRQDCAGVHGIARDLAAADMGKFKDPGIKPIKGEFPCPVSVTVEDSTLCPGFALRLVKGVKNGPSPEWLQKRLTAIGLRPINALVDITNYLTFDRSRPLHVFDAAKVKGNLVVRRAKDGETLLALDGRTYTLDSSVCVIADDHGVESLAGIMGGELSGCSAETTDVLIESALWNEINIAQSGRKLGINTDARYRFERGVDPAFMLPGLELATKLVMEFCGGTPSDVVVVGNPFADDKIIDFPLAEVKRLAGIEVSLTEIRRILNHLGFTVVGQAPVVKVAVPSWRSDVHGKADIVEEIVRIVGVDKVPLTPFERGDAPRKPVLTQIQNRTRRAKRALAARGLTEAVTWSFISKPFAEAFGGGQPELALANPIASDLSDMRPSLLPGLIAAAQANADRGSPDLALFEVGQVFKGDRPQDQFMAASGVRRGVASSAGLGRHWSGSAQATALDAKADAFAVLAAAGAPMAGLQIATNKLPAWLHPGRSGAIQIGPQNVLGYFGELHPRVLEQLGADGPLVAFEVILEKIPDPKQRPTRAKPALELSAFHPVSRDFAFIVDRKVAVADIVRAAQGVDKKLITSVSVFDVYEGKGIDPDKKSVAIAVTLQPRDKTMTDQEIEAVAAKIVAEVTKKTGGSLRG</sequence>
<evidence type="ECO:0000255" key="1">
    <source>
        <dbReference type="HAMAP-Rule" id="MF_00283"/>
    </source>
</evidence>
<organism>
    <name type="scientific">Rhodopseudomonas palustris (strain ATCC BAA-98 / CGA009)</name>
    <dbReference type="NCBI Taxonomy" id="258594"/>
    <lineage>
        <taxon>Bacteria</taxon>
        <taxon>Pseudomonadati</taxon>
        <taxon>Pseudomonadota</taxon>
        <taxon>Alphaproteobacteria</taxon>
        <taxon>Hyphomicrobiales</taxon>
        <taxon>Nitrobacteraceae</taxon>
        <taxon>Rhodopseudomonas</taxon>
    </lineage>
</organism>